<feature type="chain" id="PRO_0000265031" description="Putative 3-methyladenine DNA glycosylase">
    <location>
        <begin position="1"/>
        <end position="183"/>
    </location>
</feature>
<reference key="1">
    <citation type="journal article" date="2004" name="Nat. Genet.">
        <title>Evidence in the Legionella pneumophila genome for exploitation of host cell functions and high genome plasticity.</title>
        <authorList>
            <person name="Cazalet C."/>
            <person name="Rusniok C."/>
            <person name="Brueggemann H."/>
            <person name="Zidane N."/>
            <person name="Magnier A."/>
            <person name="Ma L."/>
            <person name="Tichit M."/>
            <person name="Jarraud S."/>
            <person name="Bouchier C."/>
            <person name="Vandenesch F."/>
            <person name="Kunst F."/>
            <person name="Etienne J."/>
            <person name="Glaser P."/>
            <person name="Buchrieser C."/>
        </authorList>
    </citation>
    <scope>NUCLEOTIDE SEQUENCE [LARGE SCALE GENOMIC DNA]</scope>
    <source>
        <strain>Paris</strain>
    </source>
</reference>
<name>3MGH_LEGPA</name>
<evidence type="ECO:0000255" key="1">
    <source>
        <dbReference type="HAMAP-Rule" id="MF_00527"/>
    </source>
</evidence>
<protein>
    <recommendedName>
        <fullName evidence="1">Putative 3-methyladenine DNA glycosylase</fullName>
        <ecNumber evidence="1">3.2.2.-</ecNumber>
    </recommendedName>
</protein>
<accession>Q5X6N6</accession>
<comment type="similarity">
    <text evidence="1">Belongs to the DNA glycosylase MPG family.</text>
</comment>
<dbReference type="EC" id="3.2.2.-" evidence="1"/>
<dbReference type="EMBL" id="CR628336">
    <property type="protein sequence ID" value="CAH12080.1"/>
    <property type="molecule type" value="Genomic_DNA"/>
</dbReference>
<dbReference type="RefSeq" id="WP_010946602.1">
    <property type="nucleotide sequence ID" value="NC_006368.1"/>
</dbReference>
<dbReference type="SMR" id="Q5X6N6"/>
<dbReference type="KEGG" id="lpp:lpp0929"/>
<dbReference type="LegioList" id="lpp0929"/>
<dbReference type="HOGENOM" id="CLU_060471_4_1_6"/>
<dbReference type="GO" id="GO:0003905">
    <property type="term" value="F:alkylbase DNA N-glycosylase activity"/>
    <property type="evidence" value="ECO:0007669"/>
    <property type="project" value="InterPro"/>
</dbReference>
<dbReference type="GO" id="GO:0003677">
    <property type="term" value="F:DNA binding"/>
    <property type="evidence" value="ECO:0007669"/>
    <property type="project" value="InterPro"/>
</dbReference>
<dbReference type="GO" id="GO:0006284">
    <property type="term" value="P:base-excision repair"/>
    <property type="evidence" value="ECO:0007669"/>
    <property type="project" value="InterPro"/>
</dbReference>
<dbReference type="CDD" id="cd00540">
    <property type="entry name" value="AAG"/>
    <property type="match status" value="1"/>
</dbReference>
<dbReference type="FunFam" id="3.10.300.10:FF:000001">
    <property type="entry name" value="Putative 3-methyladenine DNA glycosylase"/>
    <property type="match status" value="1"/>
</dbReference>
<dbReference type="Gene3D" id="3.10.300.10">
    <property type="entry name" value="Methylpurine-DNA glycosylase (MPG)"/>
    <property type="match status" value="1"/>
</dbReference>
<dbReference type="HAMAP" id="MF_00527">
    <property type="entry name" value="3MGH"/>
    <property type="match status" value="1"/>
</dbReference>
<dbReference type="InterPro" id="IPR011034">
    <property type="entry name" value="Formyl_transferase-like_C_sf"/>
</dbReference>
<dbReference type="InterPro" id="IPR003180">
    <property type="entry name" value="MPG"/>
</dbReference>
<dbReference type="InterPro" id="IPR036995">
    <property type="entry name" value="MPG_sf"/>
</dbReference>
<dbReference type="NCBIfam" id="TIGR00567">
    <property type="entry name" value="3mg"/>
    <property type="match status" value="1"/>
</dbReference>
<dbReference type="PANTHER" id="PTHR10429">
    <property type="entry name" value="DNA-3-METHYLADENINE GLYCOSYLASE"/>
    <property type="match status" value="1"/>
</dbReference>
<dbReference type="PANTHER" id="PTHR10429:SF0">
    <property type="entry name" value="DNA-3-METHYLADENINE GLYCOSYLASE"/>
    <property type="match status" value="1"/>
</dbReference>
<dbReference type="Pfam" id="PF02245">
    <property type="entry name" value="Pur_DNA_glyco"/>
    <property type="match status" value="1"/>
</dbReference>
<dbReference type="SUPFAM" id="SSF50486">
    <property type="entry name" value="FMT C-terminal domain-like"/>
    <property type="match status" value="1"/>
</dbReference>
<sequence>MRKLLRPFYERDTVLVAKELLGKYLVHHDGLEEKIGRIVEVEAYLGQHDLACHSSKGLTKRTKVMFGPAGYAYVYLIYGMYYCMNVVTEKEGIGSAVLIRALEPIKNIQDRTQGPGLLSKAMRIDSKLNHRDLLSNDFYIAEPNSPTDFTIIEKPRIGVHYAKEWANELLRFYIKDNPYISKT</sequence>
<proteinExistence type="inferred from homology"/>
<organism>
    <name type="scientific">Legionella pneumophila (strain Paris)</name>
    <dbReference type="NCBI Taxonomy" id="297246"/>
    <lineage>
        <taxon>Bacteria</taxon>
        <taxon>Pseudomonadati</taxon>
        <taxon>Pseudomonadota</taxon>
        <taxon>Gammaproteobacteria</taxon>
        <taxon>Legionellales</taxon>
        <taxon>Legionellaceae</taxon>
        <taxon>Legionella</taxon>
    </lineage>
</organism>
<keyword id="KW-0227">DNA damage</keyword>
<keyword id="KW-0234">DNA repair</keyword>
<keyword id="KW-0378">Hydrolase</keyword>
<gene>
    <name type="ordered locus">lpp0929</name>
</gene>